<organism>
    <name type="scientific">Erythrobacter litoralis (strain HTCC2594)</name>
    <dbReference type="NCBI Taxonomy" id="314225"/>
    <lineage>
        <taxon>Bacteria</taxon>
        <taxon>Pseudomonadati</taxon>
        <taxon>Pseudomonadota</taxon>
        <taxon>Alphaproteobacteria</taxon>
        <taxon>Sphingomonadales</taxon>
        <taxon>Erythrobacteraceae</taxon>
        <taxon>Erythrobacter/Porphyrobacter group</taxon>
        <taxon>Erythrobacter</taxon>
    </lineage>
</organism>
<gene>
    <name evidence="1" type="primary">rimP</name>
    <name type="ordered locus">ELI_03425</name>
</gene>
<protein>
    <recommendedName>
        <fullName evidence="1">Ribosome maturation factor RimP</fullName>
    </recommendedName>
</protein>
<name>RIMP_ERYLH</name>
<evidence type="ECO:0000255" key="1">
    <source>
        <dbReference type="HAMAP-Rule" id="MF_01077"/>
    </source>
</evidence>
<reference key="1">
    <citation type="journal article" date="2009" name="J. Bacteriol.">
        <title>Complete genome sequence of Erythrobacter litoralis HTCC2594.</title>
        <authorList>
            <person name="Oh H.M."/>
            <person name="Giovannoni S.J."/>
            <person name="Ferriera S."/>
            <person name="Johnson J."/>
            <person name="Cho J.C."/>
        </authorList>
    </citation>
    <scope>NUCLEOTIDE SEQUENCE [LARGE SCALE GENOMIC DNA]</scope>
    <source>
        <strain>HTCC2594</strain>
    </source>
</reference>
<comment type="function">
    <text evidence="1">Required for maturation of 30S ribosomal subunits.</text>
</comment>
<comment type="subcellular location">
    <subcellularLocation>
        <location evidence="1">Cytoplasm</location>
    </subcellularLocation>
</comment>
<comment type="similarity">
    <text evidence="1">Belongs to the RimP family.</text>
</comment>
<dbReference type="EMBL" id="CP000157">
    <property type="protein sequence ID" value="ABC62777.1"/>
    <property type="molecule type" value="Genomic_DNA"/>
</dbReference>
<dbReference type="RefSeq" id="WP_011413653.1">
    <property type="nucleotide sequence ID" value="NC_007722.1"/>
</dbReference>
<dbReference type="SMR" id="Q2NC14"/>
<dbReference type="STRING" id="314225.ELI_03425"/>
<dbReference type="KEGG" id="eli:ELI_03425"/>
<dbReference type="eggNOG" id="COG0779">
    <property type="taxonomic scope" value="Bacteria"/>
</dbReference>
<dbReference type="HOGENOM" id="CLU_070525_0_1_5"/>
<dbReference type="OrthoDB" id="9805006at2"/>
<dbReference type="Proteomes" id="UP000008808">
    <property type="component" value="Chromosome"/>
</dbReference>
<dbReference type="GO" id="GO:0005829">
    <property type="term" value="C:cytosol"/>
    <property type="evidence" value="ECO:0007669"/>
    <property type="project" value="TreeGrafter"/>
</dbReference>
<dbReference type="GO" id="GO:0000028">
    <property type="term" value="P:ribosomal small subunit assembly"/>
    <property type="evidence" value="ECO:0007669"/>
    <property type="project" value="TreeGrafter"/>
</dbReference>
<dbReference type="GO" id="GO:0006412">
    <property type="term" value="P:translation"/>
    <property type="evidence" value="ECO:0007669"/>
    <property type="project" value="TreeGrafter"/>
</dbReference>
<dbReference type="CDD" id="cd01734">
    <property type="entry name" value="YlxS_C"/>
    <property type="match status" value="1"/>
</dbReference>
<dbReference type="Gene3D" id="2.30.30.180">
    <property type="entry name" value="Ribosome maturation factor RimP, C-terminal domain"/>
    <property type="match status" value="1"/>
</dbReference>
<dbReference type="Gene3D" id="3.30.300.70">
    <property type="entry name" value="RimP-like superfamily, N-terminal"/>
    <property type="match status" value="1"/>
</dbReference>
<dbReference type="HAMAP" id="MF_01077">
    <property type="entry name" value="RimP"/>
    <property type="match status" value="1"/>
</dbReference>
<dbReference type="InterPro" id="IPR003728">
    <property type="entry name" value="Ribosome_maturation_RimP"/>
</dbReference>
<dbReference type="InterPro" id="IPR028998">
    <property type="entry name" value="RimP_C"/>
</dbReference>
<dbReference type="InterPro" id="IPR036847">
    <property type="entry name" value="RimP_C_sf"/>
</dbReference>
<dbReference type="InterPro" id="IPR028989">
    <property type="entry name" value="RimP_N"/>
</dbReference>
<dbReference type="InterPro" id="IPR035956">
    <property type="entry name" value="RimP_N_sf"/>
</dbReference>
<dbReference type="NCBIfam" id="NF011229">
    <property type="entry name" value="PRK14636.1"/>
    <property type="match status" value="1"/>
</dbReference>
<dbReference type="PANTHER" id="PTHR33867">
    <property type="entry name" value="RIBOSOME MATURATION FACTOR RIMP"/>
    <property type="match status" value="1"/>
</dbReference>
<dbReference type="PANTHER" id="PTHR33867:SF1">
    <property type="entry name" value="RIBOSOME MATURATION FACTOR RIMP"/>
    <property type="match status" value="1"/>
</dbReference>
<dbReference type="Pfam" id="PF17384">
    <property type="entry name" value="DUF150_C"/>
    <property type="match status" value="1"/>
</dbReference>
<dbReference type="Pfam" id="PF02576">
    <property type="entry name" value="RimP_N"/>
    <property type="match status" value="1"/>
</dbReference>
<dbReference type="SUPFAM" id="SSF74942">
    <property type="entry name" value="YhbC-like, C-terminal domain"/>
    <property type="match status" value="1"/>
</dbReference>
<dbReference type="SUPFAM" id="SSF75420">
    <property type="entry name" value="YhbC-like, N-terminal domain"/>
    <property type="match status" value="1"/>
</dbReference>
<feature type="chain" id="PRO_0000384649" description="Ribosome maturation factor RimP">
    <location>
        <begin position="1"/>
        <end position="188"/>
    </location>
</feature>
<keyword id="KW-0963">Cytoplasm</keyword>
<keyword id="KW-1185">Reference proteome</keyword>
<keyword id="KW-0690">Ribosome biogenesis</keyword>
<proteinExistence type="inferred from homology"/>
<sequence length="188" mass="20170">MADLARLTALIEPEAKALGFELVRVKMMPSEAGDGGQALQIMAEDPATGQLLIEQCAELSRKVSDVIDAAEESGEVLIEGAYHLEVSSPGIDRPLTRPKDFADWAGHEAKVSLVEKIDGHRNMRGILLGIDGETVTIADNRAGEVSFALEQIHSAKLVLTDKLIAATQPLDADGAEEVLEDKEEKADD</sequence>
<accession>Q2NC14</accession>